<accession>C4ZBG2</accession>
<gene>
    <name evidence="1" type="primary">rpmI</name>
    <name type="ordered locus">EUBREC_1952</name>
</gene>
<proteinExistence type="inferred from homology"/>
<reference key="1">
    <citation type="journal article" date="2009" name="Proc. Natl. Acad. Sci. U.S.A.">
        <title>Characterizing a model human gut microbiota composed of members of its two dominant bacterial phyla.</title>
        <authorList>
            <person name="Mahowald M.A."/>
            <person name="Rey F.E."/>
            <person name="Seedorf H."/>
            <person name="Turnbaugh P.J."/>
            <person name="Fulton R.S."/>
            <person name="Wollam A."/>
            <person name="Shah N."/>
            <person name="Wang C."/>
            <person name="Magrini V."/>
            <person name="Wilson R.K."/>
            <person name="Cantarel B.L."/>
            <person name="Coutinho P.M."/>
            <person name="Henrissat B."/>
            <person name="Crock L.W."/>
            <person name="Russell A."/>
            <person name="Verberkmoes N.C."/>
            <person name="Hettich R.L."/>
            <person name="Gordon J.I."/>
        </authorList>
    </citation>
    <scope>NUCLEOTIDE SEQUENCE [LARGE SCALE GENOMIC DNA]</scope>
    <source>
        <strain>ATCC 33656 / DSM 3377 / JCM 17463 / KCTC 5835 / LMG 30912 / VPI 0990</strain>
    </source>
</reference>
<evidence type="ECO:0000255" key="1">
    <source>
        <dbReference type="HAMAP-Rule" id="MF_00514"/>
    </source>
</evidence>
<evidence type="ECO:0000305" key="2"/>
<protein>
    <recommendedName>
        <fullName evidence="1">Large ribosomal subunit protein bL35</fullName>
    </recommendedName>
    <alternativeName>
        <fullName evidence="2">50S ribosomal protein L35</fullName>
    </alternativeName>
</protein>
<comment type="similarity">
    <text evidence="1">Belongs to the bacterial ribosomal protein bL35 family.</text>
</comment>
<feature type="chain" id="PRO_1000211702" description="Large ribosomal subunit protein bL35">
    <location>
        <begin position="1"/>
        <end position="65"/>
    </location>
</feature>
<name>RL35_AGARV</name>
<keyword id="KW-0687">Ribonucleoprotein</keyword>
<keyword id="KW-0689">Ribosomal protein</keyword>
<organism>
    <name type="scientific">Agathobacter rectalis (strain ATCC 33656 / DSM 3377 / JCM 17463 / KCTC 5835 / VPI 0990)</name>
    <name type="common">Eubacterium rectale</name>
    <dbReference type="NCBI Taxonomy" id="515619"/>
    <lineage>
        <taxon>Bacteria</taxon>
        <taxon>Bacillati</taxon>
        <taxon>Bacillota</taxon>
        <taxon>Clostridia</taxon>
        <taxon>Lachnospirales</taxon>
        <taxon>Lachnospiraceae</taxon>
        <taxon>Agathobacter</taxon>
    </lineage>
</organism>
<sequence length="65" mass="7612">MPKMKTSRAAAKRFKVTGTGKLKRNKAYKRHILTKKTTKTKRNLRKATMTDETNVKNMKKILPYM</sequence>
<dbReference type="EMBL" id="CP001107">
    <property type="protein sequence ID" value="ACR75694.1"/>
    <property type="molecule type" value="Genomic_DNA"/>
</dbReference>
<dbReference type="RefSeq" id="WP_012742791.1">
    <property type="nucleotide sequence ID" value="NZ_CAXSYD010000002.1"/>
</dbReference>
<dbReference type="SMR" id="C4ZBG2"/>
<dbReference type="STRING" id="515619.EUBREC_1952"/>
<dbReference type="PaxDb" id="515619-EUBREC_1952"/>
<dbReference type="GeneID" id="86988743"/>
<dbReference type="KEGG" id="ere:EUBREC_1952"/>
<dbReference type="HOGENOM" id="CLU_169643_1_1_9"/>
<dbReference type="Proteomes" id="UP000001477">
    <property type="component" value="Chromosome"/>
</dbReference>
<dbReference type="GO" id="GO:0022625">
    <property type="term" value="C:cytosolic large ribosomal subunit"/>
    <property type="evidence" value="ECO:0007669"/>
    <property type="project" value="TreeGrafter"/>
</dbReference>
<dbReference type="GO" id="GO:0003735">
    <property type="term" value="F:structural constituent of ribosome"/>
    <property type="evidence" value="ECO:0007669"/>
    <property type="project" value="InterPro"/>
</dbReference>
<dbReference type="GO" id="GO:0006412">
    <property type="term" value="P:translation"/>
    <property type="evidence" value="ECO:0007669"/>
    <property type="project" value="UniProtKB-UniRule"/>
</dbReference>
<dbReference type="FunFam" id="4.10.410.60:FF:000001">
    <property type="entry name" value="50S ribosomal protein L35"/>
    <property type="match status" value="1"/>
</dbReference>
<dbReference type="Gene3D" id="4.10.410.60">
    <property type="match status" value="1"/>
</dbReference>
<dbReference type="HAMAP" id="MF_00514">
    <property type="entry name" value="Ribosomal_bL35"/>
    <property type="match status" value="1"/>
</dbReference>
<dbReference type="InterPro" id="IPR001706">
    <property type="entry name" value="Ribosomal_bL35"/>
</dbReference>
<dbReference type="InterPro" id="IPR021137">
    <property type="entry name" value="Ribosomal_bL35-like"/>
</dbReference>
<dbReference type="InterPro" id="IPR018265">
    <property type="entry name" value="Ribosomal_bL35_CS"/>
</dbReference>
<dbReference type="InterPro" id="IPR037229">
    <property type="entry name" value="Ribosomal_bL35_sf"/>
</dbReference>
<dbReference type="NCBIfam" id="TIGR00001">
    <property type="entry name" value="rpmI_bact"/>
    <property type="match status" value="1"/>
</dbReference>
<dbReference type="PANTHER" id="PTHR33343">
    <property type="entry name" value="54S RIBOSOMAL PROTEIN BL35M"/>
    <property type="match status" value="1"/>
</dbReference>
<dbReference type="PANTHER" id="PTHR33343:SF1">
    <property type="entry name" value="LARGE RIBOSOMAL SUBUNIT PROTEIN BL35M"/>
    <property type="match status" value="1"/>
</dbReference>
<dbReference type="Pfam" id="PF01632">
    <property type="entry name" value="Ribosomal_L35p"/>
    <property type="match status" value="1"/>
</dbReference>
<dbReference type="PRINTS" id="PR00064">
    <property type="entry name" value="RIBOSOMALL35"/>
</dbReference>
<dbReference type="SUPFAM" id="SSF143034">
    <property type="entry name" value="L35p-like"/>
    <property type="match status" value="1"/>
</dbReference>
<dbReference type="PROSITE" id="PS00936">
    <property type="entry name" value="RIBOSOMAL_L35"/>
    <property type="match status" value="1"/>
</dbReference>